<keyword id="KW-1185">Reference proteome</keyword>
<proteinExistence type="predicted"/>
<feature type="chain" id="PRO_0000348124" description="Putative uncharacterized protein DDB_G0275587">
    <location>
        <begin position="1"/>
        <end position="53"/>
    </location>
</feature>
<organism>
    <name type="scientific">Dictyostelium discoideum</name>
    <name type="common">Social amoeba</name>
    <dbReference type="NCBI Taxonomy" id="44689"/>
    <lineage>
        <taxon>Eukaryota</taxon>
        <taxon>Amoebozoa</taxon>
        <taxon>Evosea</taxon>
        <taxon>Eumycetozoa</taxon>
        <taxon>Dictyostelia</taxon>
        <taxon>Dictyosteliales</taxon>
        <taxon>Dictyosteliaceae</taxon>
        <taxon>Dictyostelium</taxon>
    </lineage>
</organism>
<reference key="1">
    <citation type="journal article" date="2002" name="Nature">
        <title>Sequence and analysis of chromosome 2 of Dictyostelium discoideum.</title>
        <authorList>
            <person name="Gloeckner G."/>
            <person name="Eichinger L."/>
            <person name="Szafranski K."/>
            <person name="Pachebat J.A."/>
            <person name="Bankier A.T."/>
            <person name="Dear P.H."/>
            <person name="Lehmann R."/>
            <person name="Baumgart C."/>
            <person name="Parra G."/>
            <person name="Abril J.F."/>
            <person name="Guigo R."/>
            <person name="Kumpf K."/>
            <person name="Tunggal B."/>
            <person name="Cox E.C."/>
            <person name="Quail M.A."/>
            <person name="Platzer M."/>
            <person name="Rosenthal A."/>
            <person name="Noegel A.A."/>
        </authorList>
    </citation>
    <scope>NUCLEOTIDE SEQUENCE [LARGE SCALE GENOMIC DNA]</scope>
    <source>
        <strain>AX4</strain>
    </source>
</reference>
<reference key="2">
    <citation type="journal article" date="2005" name="Nature">
        <title>The genome of the social amoeba Dictyostelium discoideum.</title>
        <authorList>
            <person name="Eichinger L."/>
            <person name="Pachebat J.A."/>
            <person name="Gloeckner G."/>
            <person name="Rajandream M.A."/>
            <person name="Sucgang R."/>
            <person name="Berriman M."/>
            <person name="Song J."/>
            <person name="Olsen R."/>
            <person name="Szafranski K."/>
            <person name="Xu Q."/>
            <person name="Tunggal B."/>
            <person name="Kummerfeld S."/>
            <person name="Madera M."/>
            <person name="Konfortov B.A."/>
            <person name="Rivero F."/>
            <person name="Bankier A.T."/>
            <person name="Lehmann R."/>
            <person name="Hamlin N."/>
            <person name="Davies R."/>
            <person name="Gaudet P."/>
            <person name="Fey P."/>
            <person name="Pilcher K."/>
            <person name="Chen G."/>
            <person name="Saunders D."/>
            <person name="Sodergren E.J."/>
            <person name="Davis P."/>
            <person name="Kerhornou A."/>
            <person name="Nie X."/>
            <person name="Hall N."/>
            <person name="Anjard C."/>
            <person name="Hemphill L."/>
            <person name="Bason N."/>
            <person name="Farbrother P."/>
            <person name="Desany B."/>
            <person name="Just E."/>
            <person name="Morio T."/>
            <person name="Rost R."/>
            <person name="Churcher C.M."/>
            <person name="Cooper J."/>
            <person name="Haydock S."/>
            <person name="van Driessche N."/>
            <person name="Cronin A."/>
            <person name="Goodhead I."/>
            <person name="Muzny D.M."/>
            <person name="Mourier T."/>
            <person name="Pain A."/>
            <person name="Lu M."/>
            <person name="Harper D."/>
            <person name="Lindsay R."/>
            <person name="Hauser H."/>
            <person name="James K.D."/>
            <person name="Quiles M."/>
            <person name="Madan Babu M."/>
            <person name="Saito T."/>
            <person name="Buchrieser C."/>
            <person name="Wardroper A."/>
            <person name="Felder M."/>
            <person name="Thangavelu M."/>
            <person name="Johnson D."/>
            <person name="Knights A."/>
            <person name="Loulseged H."/>
            <person name="Mungall K.L."/>
            <person name="Oliver K."/>
            <person name="Price C."/>
            <person name="Quail M.A."/>
            <person name="Urushihara H."/>
            <person name="Hernandez J."/>
            <person name="Rabbinowitsch E."/>
            <person name="Steffen D."/>
            <person name="Sanders M."/>
            <person name="Ma J."/>
            <person name="Kohara Y."/>
            <person name="Sharp S."/>
            <person name="Simmonds M.N."/>
            <person name="Spiegler S."/>
            <person name="Tivey A."/>
            <person name="Sugano S."/>
            <person name="White B."/>
            <person name="Walker D."/>
            <person name="Woodward J.R."/>
            <person name="Winckler T."/>
            <person name="Tanaka Y."/>
            <person name="Shaulsky G."/>
            <person name="Schleicher M."/>
            <person name="Weinstock G.M."/>
            <person name="Rosenthal A."/>
            <person name="Cox E.C."/>
            <person name="Chisholm R.L."/>
            <person name="Gibbs R.A."/>
            <person name="Loomis W.F."/>
            <person name="Platzer M."/>
            <person name="Kay R.R."/>
            <person name="Williams J.G."/>
            <person name="Dear P.H."/>
            <person name="Noegel A.A."/>
            <person name="Barrell B.G."/>
            <person name="Kuspa A."/>
        </authorList>
    </citation>
    <scope>NUCLEOTIDE SEQUENCE [LARGE SCALE GENOMIC DNA]</scope>
    <source>
        <strain>AX4</strain>
    </source>
</reference>
<accession>Q86H87</accession>
<accession>Q553J3</accession>
<sequence length="53" mass="6090">MLFKSIISLSNSSKSLNNKINNDNENNNLEFSSNKTTINPYSVFSYSRPLWNC</sequence>
<gene>
    <name type="ORF">DDB_G0275587</name>
</gene>
<name>Y7311_DICDI</name>
<protein>
    <recommendedName>
        <fullName>Putative uncharacterized protein DDB_G0275587</fullName>
    </recommendedName>
</protein>
<dbReference type="EMBL" id="AAFI02000013">
    <property type="protein sequence ID" value="EAL69544.1"/>
    <property type="molecule type" value="Genomic_DNA"/>
</dbReference>
<dbReference type="RefSeq" id="XP_643420.1">
    <property type="nucleotide sequence ID" value="XM_638328.1"/>
</dbReference>
<dbReference type="PaxDb" id="44689-DDB0167311"/>
<dbReference type="EnsemblProtists" id="EAL69544">
    <property type="protein sequence ID" value="EAL69544"/>
    <property type="gene ID" value="DDB_G0275587"/>
</dbReference>
<dbReference type="GeneID" id="8620006"/>
<dbReference type="KEGG" id="ddi:DDB_G0275587"/>
<dbReference type="dictyBase" id="DDB_G0275587"/>
<dbReference type="HOGENOM" id="CLU_3072686_0_0_1"/>
<dbReference type="InParanoid" id="Q86H87"/>
<dbReference type="PRO" id="PR:Q86H87"/>
<dbReference type="Proteomes" id="UP000002195">
    <property type="component" value="Chromosome 2"/>
</dbReference>